<keyword id="KW-0067">ATP-binding</keyword>
<keyword id="KW-1003">Cell membrane</keyword>
<keyword id="KW-0325">Glycoprotein</keyword>
<keyword id="KW-0472">Membrane</keyword>
<keyword id="KW-0547">Nucleotide-binding</keyword>
<keyword id="KW-1185">Reference proteome</keyword>
<keyword id="KW-0677">Repeat</keyword>
<keyword id="KW-0812">Transmembrane</keyword>
<keyword id="KW-1133">Transmembrane helix</keyword>
<keyword id="KW-0813">Transport</keyword>
<evidence type="ECO:0000255" key="1"/>
<evidence type="ECO:0000255" key="2">
    <source>
        <dbReference type="PROSITE-ProRule" id="PRU00434"/>
    </source>
</evidence>
<evidence type="ECO:0000255" key="3">
    <source>
        <dbReference type="PROSITE-ProRule" id="PRU00498"/>
    </source>
</evidence>
<evidence type="ECO:0000256" key="4">
    <source>
        <dbReference type="SAM" id="MobiDB-lite"/>
    </source>
</evidence>
<evidence type="ECO:0000269" key="5">
    <source>
    </source>
</evidence>
<evidence type="ECO:0000303" key="6">
    <source>
    </source>
</evidence>
<evidence type="ECO:0000305" key="7"/>
<evidence type="ECO:0000305" key="8">
    <source>
    </source>
</evidence>
<feature type="chain" id="PRO_0000449471" description="ABC multidrug transporter atrH">
    <location>
        <begin position="1"/>
        <end position="1481"/>
    </location>
</feature>
<feature type="transmembrane region" description="Helical" evidence="1">
    <location>
        <begin position="507"/>
        <end position="527"/>
    </location>
</feature>
<feature type="transmembrane region" description="Helical" evidence="1">
    <location>
        <begin position="542"/>
        <end position="562"/>
    </location>
</feature>
<feature type="transmembrane region" description="Helical" evidence="1">
    <location>
        <begin position="587"/>
        <end position="607"/>
    </location>
</feature>
<feature type="transmembrane region" description="Helical" evidence="1">
    <location>
        <begin position="616"/>
        <end position="636"/>
    </location>
</feature>
<feature type="transmembrane region" description="Helical" evidence="1">
    <location>
        <begin position="650"/>
        <end position="670"/>
    </location>
</feature>
<feature type="transmembrane region" description="Helical" evidence="1">
    <location>
        <begin position="758"/>
        <end position="778"/>
    </location>
</feature>
<feature type="transmembrane region" description="Helical" evidence="1">
    <location>
        <begin position="1174"/>
        <end position="1194"/>
    </location>
</feature>
<feature type="transmembrane region" description="Helical" evidence="1">
    <location>
        <begin position="1210"/>
        <end position="1230"/>
    </location>
</feature>
<feature type="transmembrane region" description="Helical" evidence="1">
    <location>
        <begin position="1249"/>
        <end position="1269"/>
    </location>
</feature>
<feature type="transmembrane region" description="Helical" evidence="1">
    <location>
        <begin position="1298"/>
        <end position="1318"/>
    </location>
</feature>
<feature type="transmembrane region" description="Helical" evidence="1">
    <location>
        <begin position="1327"/>
        <end position="1347"/>
    </location>
</feature>
<feature type="transmembrane region" description="Helical" evidence="1">
    <location>
        <begin position="1358"/>
        <end position="1378"/>
    </location>
</feature>
<feature type="transmembrane region" description="Helical" evidence="1">
    <location>
        <begin position="1446"/>
        <end position="1466"/>
    </location>
</feature>
<feature type="domain" description="ABC transporter 1" evidence="2">
    <location>
        <begin position="134"/>
        <end position="396"/>
    </location>
</feature>
<feature type="domain" description="ABC transporter 2" evidence="2">
    <location>
        <begin position="838"/>
        <end position="1081"/>
    </location>
</feature>
<feature type="region of interest" description="Disordered" evidence="4">
    <location>
        <begin position="1"/>
        <end position="45"/>
    </location>
</feature>
<feature type="region of interest" description="Disordered" evidence="4">
    <location>
        <begin position="61"/>
        <end position="89"/>
    </location>
</feature>
<feature type="compositionally biased region" description="Basic and acidic residues" evidence="4">
    <location>
        <begin position="1"/>
        <end position="10"/>
    </location>
</feature>
<feature type="binding site" evidence="2">
    <location>
        <begin position="874"/>
        <end position="881"/>
    </location>
    <ligand>
        <name>ATP</name>
        <dbReference type="ChEBI" id="CHEBI:30616"/>
    </ligand>
</feature>
<feature type="glycosylation site" description="N-linked (GlcNAc...) asparagine" evidence="3">
    <location>
        <position position="19"/>
    </location>
</feature>
<feature type="glycosylation site" description="N-linked (GlcNAc...) asparagine" evidence="3">
    <location>
        <position position="76"/>
    </location>
</feature>
<feature type="glycosylation site" description="N-linked (GlcNAc...) asparagine" evidence="3">
    <location>
        <position position="320"/>
    </location>
</feature>
<feature type="glycosylation site" description="N-linked (GlcNAc...) asparagine" evidence="3">
    <location>
        <position position="530"/>
    </location>
</feature>
<feature type="glycosylation site" description="N-linked (GlcNAc...) asparagine" evidence="3">
    <location>
        <position position="1395"/>
    </location>
</feature>
<protein>
    <recommendedName>
        <fullName evidence="6">ABC multidrug transporter atrH</fullName>
    </recommendedName>
</protein>
<reference key="1">
    <citation type="journal article" date="2005" name="Nature">
        <title>Genome sequencing and analysis of Aspergillus oryzae.</title>
        <authorList>
            <person name="Machida M."/>
            <person name="Asai K."/>
            <person name="Sano M."/>
            <person name="Tanaka T."/>
            <person name="Kumagai T."/>
            <person name="Terai G."/>
            <person name="Kusumoto K."/>
            <person name="Arima T."/>
            <person name="Akita O."/>
            <person name="Kashiwagi Y."/>
            <person name="Abe K."/>
            <person name="Gomi K."/>
            <person name="Horiuchi H."/>
            <person name="Kitamoto K."/>
            <person name="Kobayashi T."/>
            <person name="Takeuchi M."/>
            <person name="Denning D.W."/>
            <person name="Galagan J.E."/>
            <person name="Nierman W.C."/>
            <person name="Yu J."/>
            <person name="Archer D.B."/>
            <person name="Bennett J.W."/>
            <person name="Bhatnagar D."/>
            <person name="Cleveland T.E."/>
            <person name="Fedorova N.D."/>
            <person name="Gotoh O."/>
            <person name="Horikawa H."/>
            <person name="Hosoyama A."/>
            <person name="Ichinomiya M."/>
            <person name="Igarashi R."/>
            <person name="Iwashita K."/>
            <person name="Juvvadi P.R."/>
            <person name="Kato M."/>
            <person name="Kato Y."/>
            <person name="Kin T."/>
            <person name="Kokubun A."/>
            <person name="Maeda H."/>
            <person name="Maeyama N."/>
            <person name="Maruyama J."/>
            <person name="Nagasaki H."/>
            <person name="Nakajima T."/>
            <person name="Oda K."/>
            <person name="Okada K."/>
            <person name="Paulsen I."/>
            <person name="Sakamoto K."/>
            <person name="Sawano T."/>
            <person name="Takahashi M."/>
            <person name="Takase K."/>
            <person name="Terabayashi Y."/>
            <person name="Wortman J.R."/>
            <person name="Yamada O."/>
            <person name="Yamagata Y."/>
            <person name="Anazawa H."/>
            <person name="Hata Y."/>
            <person name="Koide Y."/>
            <person name="Komori T."/>
            <person name="Koyama Y."/>
            <person name="Minetoki T."/>
            <person name="Suharnan S."/>
            <person name="Tanaka A."/>
            <person name="Isono K."/>
            <person name="Kuhara S."/>
            <person name="Ogasawara N."/>
            <person name="Kikuchi H."/>
        </authorList>
    </citation>
    <scope>NUCLEOTIDE SEQUENCE [LARGE SCALE GENOMIC DNA]</scope>
    <source>
        <strain>ATCC 42149 / RIB 40</strain>
    </source>
</reference>
<reference key="2">
    <citation type="journal article" date="2018" name="Biosci. Biotechnol. Biochem.">
        <title>The PDR-type ABC transporters AtrA and AtrG are involved in azole drug resistance in Aspergillus oryzae.</title>
        <authorList>
            <person name="Miura D."/>
            <person name="Sugiyama K."/>
            <person name="Ito A."/>
            <person name="Ohba-Tanaka A."/>
            <person name="Tanaka M."/>
            <person name="Shintani T."/>
            <person name="Gomi K."/>
        </authorList>
    </citation>
    <scope>FUNCTION</scope>
    <scope>INDUCTION</scope>
    <scope>DISRUPTION PHENOTYPE</scope>
</reference>
<gene>
    <name evidence="6" type="primary">atrH</name>
    <name type="ORF">AO090012000328</name>
</gene>
<accession>Q2UD41</accession>
<proteinExistence type="evidence at transcript level"/>
<dbReference type="EMBL" id="BA000052">
    <property type="protein sequence ID" value="BAE60524.1"/>
    <property type="molecule type" value="Genomic_DNA"/>
</dbReference>
<dbReference type="RefSeq" id="XP_001727363.1">
    <property type="nucleotide sequence ID" value="XM_001727311.2"/>
</dbReference>
<dbReference type="SMR" id="Q2UD41"/>
<dbReference type="GlyCosmos" id="Q2UD41">
    <property type="glycosylation" value="5 sites, No reported glycans"/>
</dbReference>
<dbReference type="EnsemblFungi" id="BAE60524">
    <property type="protein sequence ID" value="BAE60524"/>
    <property type="gene ID" value="AO090012000328"/>
</dbReference>
<dbReference type="GeneID" id="5987837"/>
<dbReference type="KEGG" id="aor:AO090012000328"/>
<dbReference type="VEuPathDB" id="FungiDB:AO090012000328"/>
<dbReference type="HOGENOM" id="CLU_000604_35_0_1"/>
<dbReference type="OMA" id="QRMFQQY"/>
<dbReference type="OrthoDB" id="54736at5052"/>
<dbReference type="Proteomes" id="UP000006564">
    <property type="component" value="Chromosome 4"/>
</dbReference>
<dbReference type="GO" id="GO:0005886">
    <property type="term" value="C:plasma membrane"/>
    <property type="evidence" value="ECO:0007669"/>
    <property type="project" value="UniProtKB-SubCell"/>
</dbReference>
<dbReference type="GO" id="GO:0140359">
    <property type="term" value="F:ABC-type transporter activity"/>
    <property type="evidence" value="ECO:0007669"/>
    <property type="project" value="InterPro"/>
</dbReference>
<dbReference type="GO" id="GO:0005524">
    <property type="term" value="F:ATP binding"/>
    <property type="evidence" value="ECO:0007669"/>
    <property type="project" value="UniProtKB-KW"/>
</dbReference>
<dbReference type="GO" id="GO:0016887">
    <property type="term" value="F:ATP hydrolysis activity"/>
    <property type="evidence" value="ECO:0007669"/>
    <property type="project" value="InterPro"/>
</dbReference>
<dbReference type="CDD" id="cd03233">
    <property type="entry name" value="ABCG_PDR_domain1"/>
    <property type="match status" value="1"/>
</dbReference>
<dbReference type="CDD" id="cd03232">
    <property type="entry name" value="ABCG_PDR_domain2"/>
    <property type="match status" value="1"/>
</dbReference>
<dbReference type="FunFam" id="3.40.50.300:FF:000881">
    <property type="entry name" value="ABC multidrug transporter A-1"/>
    <property type="match status" value="1"/>
</dbReference>
<dbReference type="FunFam" id="3.40.50.300:FF:000054">
    <property type="entry name" value="ABC multidrug transporter atrF"/>
    <property type="match status" value="1"/>
</dbReference>
<dbReference type="Gene3D" id="3.40.50.300">
    <property type="entry name" value="P-loop containing nucleotide triphosphate hydrolases"/>
    <property type="match status" value="2"/>
</dbReference>
<dbReference type="InterPro" id="IPR003593">
    <property type="entry name" value="AAA+_ATPase"/>
</dbReference>
<dbReference type="InterPro" id="IPR013525">
    <property type="entry name" value="ABC2_TM"/>
</dbReference>
<dbReference type="InterPro" id="IPR029481">
    <property type="entry name" value="ABC_trans_N"/>
</dbReference>
<dbReference type="InterPro" id="IPR003439">
    <property type="entry name" value="ABC_transporter-like_ATP-bd"/>
</dbReference>
<dbReference type="InterPro" id="IPR017871">
    <property type="entry name" value="ABC_transporter-like_CS"/>
</dbReference>
<dbReference type="InterPro" id="IPR043926">
    <property type="entry name" value="ABCG_dom"/>
</dbReference>
<dbReference type="InterPro" id="IPR034001">
    <property type="entry name" value="ABCG_PDR_1"/>
</dbReference>
<dbReference type="InterPro" id="IPR034003">
    <property type="entry name" value="ABCG_PDR_2"/>
</dbReference>
<dbReference type="InterPro" id="IPR027417">
    <property type="entry name" value="P-loop_NTPase"/>
</dbReference>
<dbReference type="InterPro" id="IPR010929">
    <property type="entry name" value="PDR_CDR_ABC"/>
</dbReference>
<dbReference type="PANTHER" id="PTHR19241">
    <property type="entry name" value="ATP-BINDING CASSETTE TRANSPORTER"/>
    <property type="match status" value="1"/>
</dbReference>
<dbReference type="Pfam" id="PF01061">
    <property type="entry name" value="ABC2_membrane"/>
    <property type="match status" value="2"/>
</dbReference>
<dbReference type="Pfam" id="PF19055">
    <property type="entry name" value="ABC2_membrane_7"/>
    <property type="match status" value="1"/>
</dbReference>
<dbReference type="Pfam" id="PF00005">
    <property type="entry name" value="ABC_tran"/>
    <property type="match status" value="2"/>
</dbReference>
<dbReference type="Pfam" id="PF14510">
    <property type="entry name" value="ABC_trans_N"/>
    <property type="match status" value="1"/>
</dbReference>
<dbReference type="Pfam" id="PF06422">
    <property type="entry name" value="PDR_CDR"/>
    <property type="match status" value="1"/>
</dbReference>
<dbReference type="SMART" id="SM00382">
    <property type="entry name" value="AAA"/>
    <property type="match status" value="2"/>
</dbReference>
<dbReference type="SUPFAM" id="SSF52540">
    <property type="entry name" value="P-loop containing nucleoside triphosphate hydrolases"/>
    <property type="match status" value="2"/>
</dbReference>
<dbReference type="PROSITE" id="PS00211">
    <property type="entry name" value="ABC_TRANSPORTER_1"/>
    <property type="match status" value="1"/>
</dbReference>
<dbReference type="PROSITE" id="PS50893">
    <property type="entry name" value="ABC_TRANSPORTER_2"/>
    <property type="match status" value="2"/>
</dbReference>
<comment type="function">
    <text evidence="5">Pleiotropic ABC efflux transporter involved in the basal level of azole susceptibility.</text>
</comment>
<comment type="subcellular location">
    <subcellularLocation>
        <location evidence="8">Cell membrane</location>
        <topology evidence="1">Multi-pass membrane protein</topology>
    </subcellularLocation>
</comment>
<comment type="induction">
    <text evidence="5">Expression is slightly up-regulated in the presence of miconazole.</text>
</comment>
<comment type="disruption phenotype">
    <text evidence="5">Does not significantly affect miconazole susceptibility.</text>
</comment>
<comment type="similarity">
    <text evidence="7">Belongs to the ABC transporter superfamily. ABCG family. PDR (TC 3.A.1.205) subfamily.</text>
</comment>
<organism>
    <name type="scientific">Aspergillus oryzae (strain ATCC 42149 / RIB 40)</name>
    <name type="common">Yellow koji mold</name>
    <dbReference type="NCBI Taxonomy" id="510516"/>
    <lineage>
        <taxon>Eukaryota</taxon>
        <taxon>Fungi</taxon>
        <taxon>Dikarya</taxon>
        <taxon>Ascomycota</taxon>
        <taxon>Pezizomycotina</taxon>
        <taxon>Eurotiomycetes</taxon>
        <taxon>Eurotiomycetidae</taxon>
        <taxon>Eurotiales</taxon>
        <taxon>Aspergillaceae</taxon>
        <taxon>Aspergillus</taxon>
        <taxon>Aspergillus subgen. Circumdati</taxon>
    </lineage>
</organism>
<sequence>MALPREERSLHGHANIHVNQTTGPAIDKAESSDTIGADSEDGIEQEGQAKITTLARTLSRISQTNSGTEGLNPFLNTSDPELDPNSDQFNSRKWTKTLLHITSRDPERYPRRTAGVSFRNLNAFGYGTAADYQATVSNVWLKAAGWLRGLFGNGNKVRIDILRNFEGFVNSGEMLVVLGRPGSGCSTFLKTIAGETHGLWLDKGTDIQYQGISWDEMHSRFRGEVMYQAETEIHFPQLTAGDTLLFAAKARAPANRLPGVSRDQYATHMRDVVMAMLGLTHTMNTLVGNEFIRGVSGGERKRVSIAETTLCGSPLQCWDNSTRGLDSSTALEFVKNLRLSTDYTGSTAIVAIYQASQAIYDVFDKVIVLYEGRQIYFGRARDAKRFFIEMGFDCPERQTTGDFLTSLTSPTERLVRKGYEHLVPRTPDEFAARWRDSLERKQLLADIEAFQNEFPLGGSKKEEFSRSRAAEKAKNTRASSPYTLSYSMQIKLCLQRGFLRLKGDMSMTLSTVIGNSILALIISSVFYNLNETTDSYFSRGALLFFAILLNAFASALEMLTLWQQRPIVEKHDKYALYHPSAEAISSLIVDLPAKAPVSIVFNLILYFMTNLRRTPGHFFVFYLFSVTTTLTMSNVFRWIAAVSRSLAQAEVPASIFMMILMIYTGFTIPVRDMHPWFRWLNYINPIAYSFESLMINEFAGRKFHCATYVPSGPGYDNAPLDSKICSGKGAVAGQDYIDGDRYLEVAFEYYPSHLWRNFGILLGFLFFSLVAYIVASELVRAKPSKGEILVFPRGKIPAFAKKVHREADPEDVLTSEKLKVGSEQDDHVGAIVKQTSIFHWQDVCYDIKIKGQDRRILDHVDGWVKPGTLTALMGVTGAGKTSLLDVLANRVTMGVITGEMLVDGRMRDDSFQRKTGYVQQQDLHLETSTVREALIFSALLRQPASTPRKEKLAYVEEVIKMLNMEEYAEAVVGVLGEGLNVEQRKRLTIGVEIAAKPDLLLFFDEPTSGLDSQTAWSICSLMRKLVDHGQAILCTIHQPSAILMQQFDRLLFLAKGGKTVYFGDLGPNMRTLIKYFEDKGSPKCPPNANPAEWMLEVIGAAPGSRADQDWSDVWKHSRERAQVQQELLQMKQELLQRPQPPRTAGYGEFAMPLWAQFFICLQRVFQQYWRCPSYIYAKAAMCIIPPLFIGFTFWREPTSIQGMQNEMFSIFMLLVIFPNLVQQMMPYFAMQRSLYEVRERPSKAYSWKAFMLASIVVELPWNMLMAVPAYFCWYYPIGLFRNAYPTDSVTERGGTMFLLVLIFMLFTSTFSSMMIAGIDHPETASNIAQLMFSMCLIFCGVLASPDVLPRFWIFMWRASPFSYLVGSVLAVGIAGAPVHCSDIEVLHIPPPGGQNCSGYLEAFTTMAKSTLLNPEADSDCQVCSLSTTDQFLAGVHIKYSELWRNVGILFVYIVFNTVAAVFLYWLVRVPKKRALKKAKKE</sequence>
<name>ATRH_ASPOR</name>